<organism>
    <name type="scientific">Mycobacterium sp. (strain KMS)</name>
    <dbReference type="NCBI Taxonomy" id="189918"/>
    <lineage>
        <taxon>Bacteria</taxon>
        <taxon>Bacillati</taxon>
        <taxon>Actinomycetota</taxon>
        <taxon>Actinomycetes</taxon>
        <taxon>Mycobacteriales</taxon>
        <taxon>Mycobacteriaceae</taxon>
        <taxon>Mycobacterium</taxon>
    </lineage>
</organism>
<protein>
    <recommendedName>
        <fullName evidence="1">Na(+)/H(+) antiporter NhaA 2</fullName>
    </recommendedName>
    <alternativeName>
        <fullName evidence="1">Sodium/proton antiporter NhaA 2</fullName>
    </alternativeName>
</protein>
<comment type="function">
    <text evidence="1">Na(+)/H(+) antiporter that extrudes sodium in exchange for external protons.</text>
</comment>
<comment type="catalytic activity">
    <reaction evidence="1">
        <text>Na(+)(in) + 2 H(+)(out) = Na(+)(out) + 2 H(+)(in)</text>
        <dbReference type="Rhea" id="RHEA:29251"/>
        <dbReference type="ChEBI" id="CHEBI:15378"/>
        <dbReference type="ChEBI" id="CHEBI:29101"/>
    </reaction>
    <physiologicalReaction direction="left-to-right" evidence="1">
        <dbReference type="Rhea" id="RHEA:29252"/>
    </physiologicalReaction>
</comment>
<comment type="subcellular location">
    <subcellularLocation>
        <location evidence="1">Cell membrane</location>
        <topology evidence="1">Multi-pass membrane protein</topology>
    </subcellularLocation>
</comment>
<comment type="similarity">
    <text evidence="1">Belongs to the NhaA Na(+)/H(+) (TC 2.A.33) antiporter family.</text>
</comment>
<reference key="1">
    <citation type="submission" date="2006-12" db="EMBL/GenBank/DDBJ databases">
        <title>Complete sequence of chromosome of Mycobacterium sp. KMS.</title>
        <authorList>
            <consortium name="US DOE Joint Genome Institute"/>
            <person name="Copeland A."/>
            <person name="Lucas S."/>
            <person name="Lapidus A."/>
            <person name="Barry K."/>
            <person name="Detter J.C."/>
            <person name="Glavina del Rio T."/>
            <person name="Hammon N."/>
            <person name="Israni S."/>
            <person name="Dalin E."/>
            <person name="Tice H."/>
            <person name="Pitluck S."/>
            <person name="Kiss H."/>
            <person name="Brettin T."/>
            <person name="Bruce D."/>
            <person name="Han C."/>
            <person name="Tapia R."/>
            <person name="Gilna P."/>
            <person name="Schmutz J."/>
            <person name="Larimer F."/>
            <person name="Land M."/>
            <person name="Hauser L."/>
            <person name="Kyrpides N."/>
            <person name="Mikhailova N."/>
            <person name="Miller C.D."/>
            <person name="Richardson P."/>
        </authorList>
    </citation>
    <scope>NUCLEOTIDE SEQUENCE [LARGE SCALE GENOMIC DNA]</scope>
    <source>
        <strain>KMS</strain>
    </source>
</reference>
<evidence type="ECO:0000255" key="1">
    <source>
        <dbReference type="HAMAP-Rule" id="MF_01844"/>
    </source>
</evidence>
<gene>
    <name evidence="1" type="primary">nhaA2</name>
    <name type="ordered locus">Mkms_2253</name>
</gene>
<keyword id="KW-0050">Antiport</keyword>
<keyword id="KW-1003">Cell membrane</keyword>
<keyword id="KW-0406">Ion transport</keyword>
<keyword id="KW-0472">Membrane</keyword>
<keyword id="KW-0915">Sodium</keyword>
<keyword id="KW-0739">Sodium transport</keyword>
<keyword id="KW-0812">Transmembrane</keyword>
<keyword id="KW-1133">Transmembrane helix</keyword>
<keyword id="KW-0813">Transport</keyword>
<proteinExistence type="inferred from homology"/>
<name>NHAA2_MYCSK</name>
<dbReference type="EMBL" id="CP000518">
    <property type="protein sequence ID" value="ABL91451.1"/>
    <property type="molecule type" value="Genomic_DNA"/>
</dbReference>
<dbReference type="SMR" id="A1UF43"/>
<dbReference type="STRING" id="189918.Mkms_2253"/>
<dbReference type="KEGG" id="mkm:Mkms_2253"/>
<dbReference type="HOGENOM" id="CLU_015803_0_0_11"/>
<dbReference type="OrthoDB" id="9808135at2"/>
<dbReference type="GO" id="GO:0005886">
    <property type="term" value="C:plasma membrane"/>
    <property type="evidence" value="ECO:0007669"/>
    <property type="project" value="UniProtKB-SubCell"/>
</dbReference>
<dbReference type="GO" id="GO:0015385">
    <property type="term" value="F:sodium:proton antiporter activity"/>
    <property type="evidence" value="ECO:0007669"/>
    <property type="project" value="TreeGrafter"/>
</dbReference>
<dbReference type="GO" id="GO:0006885">
    <property type="term" value="P:regulation of pH"/>
    <property type="evidence" value="ECO:0007669"/>
    <property type="project" value="InterPro"/>
</dbReference>
<dbReference type="Gene3D" id="1.20.1530.10">
    <property type="entry name" value="Na+/H+ antiporter like domain"/>
    <property type="match status" value="1"/>
</dbReference>
<dbReference type="HAMAP" id="MF_01844">
    <property type="entry name" value="NhaA"/>
    <property type="match status" value="1"/>
</dbReference>
<dbReference type="InterPro" id="IPR023171">
    <property type="entry name" value="Na/H_antiporter_dom_sf"/>
</dbReference>
<dbReference type="InterPro" id="IPR004670">
    <property type="entry name" value="NhaA"/>
</dbReference>
<dbReference type="NCBIfam" id="TIGR00773">
    <property type="entry name" value="NhaA"/>
    <property type="match status" value="1"/>
</dbReference>
<dbReference type="PANTHER" id="PTHR30341:SF0">
    <property type="entry name" value="NA(+)_H(+) ANTIPORTER NHAA"/>
    <property type="match status" value="1"/>
</dbReference>
<dbReference type="PANTHER" id="PTHR30341">
    <property type="entry name" value="SODIUM ION/PROTON ANTIPORTER NHAA-RELATED"/>
    <property type="match status" value="1"/>
</dbReference>
<dbReference type="Pfam" id="PF06965">
    <property type="entry name" value="Na_H_antiport_1"/>
    <property type="match status" value="1"/>
</dbReference>
<sequence length="450" mass="47197">MTPTPGEADLTNTPAPRARRSVLSRGSWSETARIAGILRKETVGGAVLLVASAVALVWANSPWAESYFALRDLKIGAEPFGLHLNLTLGTWAADGLLAVFFLVVGLELKREFVAGDLRDPARAALPMAAAVGGMVVPALIFVAVTAPVGDGATRGWAIPTATDIAFAVAVLAVISTHLPAALRTFLLTLAVVDDLLAVTVIAVFYTDEINLTALGLSIVPLALFALCVQRRIRSWWLLLPLGVATWVLMHESGVHATVAGVLLGFTVPVLRSVAAGGPEAGPGLAEHFEHRLRPLSAGVAVPVFAFFAAGVAIGGVSGLTRALSDPITLGIILGLVVGKPVGIFLTTRVLTAVTRANLDDALRWIDVFGVALLAGIGFTVSLLIGDLAYGLGSDRDDFVKVGVLTGSLVAALIAAVLLRVRNRHYRAVWLQETADTDRDGVPDVYQSQRD</sequence>
<feature type="chain" id="PRO_0000334340" description="Na(+)/H(+) antiporter NhaA 2">
    <location>
        <begin position="1"/>
        <end position="450"/>
    </location>
</feature>
<feature type="transmembrane region" description="Helical" evidence="1">
    <location>
        <begin position="43"/>
        <end position="63"/>
    </location>
</feature>
<feature type="transmembrane region" description="Helical" evidence="1">
    <location>
        <begin position="86"/>
        <end position="106"/>
    </location>
</feature>
<feature type="transmembrane region" description="Helical" evidence="1">
    <location>
        <begin position="124"/>
        <end position="144"/>
    </location>
</feature>
<feature type="transmembrane region" description="Helical" evidence="1">
    <location>
        <begin position="155"/>
        <end position="175"/>
    </location>
</feature>
<feature type="transmembrane region" description="Helical" evidence="1">
    <location>
        <begin position="185"/>
        <end position="205"/>
    </location>
</feature>
<feature type="transmembrane region" description="Helical" evidence="1">
    <location>
        <begin position="208"/>
        <end position="228"/>
    </location>
</feature>
<feature type="transmembrane region" description="Helical" evidence="1">
    <location>
        <begin position="234"/>
        <end position="254"/>
    </location>
</feature>
<feature type="transmembrane region" description="Helical" evidence="1">
    <location>
        <begin position="258"/>
        <end position="278"/>
    </location>
</feature>
<feature type="transmembrane region" description="Helical" evidence="1">
    <location>
        <begin position="299"/>
        <end position="319"/>
    </location>
</feature>
<feature type="transmembrane region" description="Helical" evidence="1">
    <location>
        <begin position="326"/>
        <end position="346"/>
    </location>
</feature>
<feature type="transmembrane region" description="Helical" evidence="1">
    <location>
        <begin position="364"/>
        <end position="384"/>
    </location>
</feature>
<feature type="transmembrane region" description="Helical" evidence="1">
    <location>
        <begin position="398"/>
        <end position="418"/>
    </location>
</feature>
<accession>A1UF43</accession>